<organism>
    <name type="scientific">Sodalis glossinidius (strain morsitans)</name>
    <dbReference type="NCBI Taxonomy" id="343509"/>
    <lineage>
        <taxon>Bacteria</taxon>
        <taxon>Pseudomonadati</taxon>
        <taxon>Pseudomonadota</taxon>
        <taxon>Gammaproteobacteria</taxon>
        <taxon>Enterobacterales</taxon>
        <taxon>Bruguierivoracaceae</taxon>
        <taxon>Sodalis</taxon>
    </lineage>
</organism>
<keyword id="KW-0808">Transferase</keyword>
<keyword id="KW-0819">tRNA processing</keyword>
<name>CMOB_SODGM</name>
<gene>
    <name evidence="1" type="primary">cmoB</name>
    <name type="ordered locus">SG1252</name>
</gene>
<dbReference type="EC" id="2.5.1.-" evidence="1"/>
<dbReference type="EMBL" id="AP008232">
    <property type="protein sequence ID" value="BAE74527.1"/>
    <property type="molecule type" value="Genomic_DNA"/>
</dbReference>
<dbReference type="RefSeq" id="WP_011411081.1">
    <property type="nucleotide sequence ID" value="NC_007712.1"/>
</dbReference>
<dbReference type="SMR" id="Q2NTJ8"/>
<dbReference type="STRING" id="343509.SG1252"/>
<dbReference type="KEGG" id="sgl:SG1252"/>
<dbReference type="eggNOG" id="COG2227">
    <property type="taxonomic scope" value="Bacteria"/>
</dbReference>
<dbReference type="HOGENOM" id="CLU_052665_0_0_6"/>
<dbReference type="OrthoDB" id="9773188at2"/>
<dbReference type="BioCyc" id="SGLO343509:SGP1_RS11180-MONOMER"/>
<dbReference type="Proteomes" id="UP000001932">
    <property type="component" value="Chromosome"/>
</dbReference>
<dbReference type="GO" id="GO:0008168">
    <property type="term" value="F:methyltransferase activity"/>
    <property type="evidence" value="ECO:0007669"/>
    <property type="project" value="TreeGrafter"/>
</dbReference>
<dbReference type="GO" id="GO:0016765">
    <property type="term" value="F:transferase activity, transferring alkyl or aryl (other than methyl) groups"/>
    <property type="evidence" value="ECO:0007669"/>
    <property type="project" value="UniProtKB-UniRule"/>
</dbReference>
<dbReference type="GO" id="GO:0002098">
    <property type="term" value="P:tRNA wobble uridine modification"/>
    <property type="evidence" value="ECO:0007669"/>
    <property type="project" value="InterPro"/>
</dbReference>
<dbReference type="CDD" id="cd02440">
    <property type="entry name" value="AdoMet_MTases"/>
    <property type="match status" value="1"/>
</dbReference>
<dbReference type="Gene3D" id="3.40.50.150">
    <property type="entry name" value="Vaccinia Virus protein VP39"/>
    <property type="match status" value="1"/>
</dbReference>
<dbReference type="HAMAP" id="MF_01590">
    <property type="entry name" value="tRNA_carboxymethyltr_CmoB"/>
    <property type="match status" value="1"/>
</dbReference>
<dbReference type="InterPro" id="IPR010017">
    <property type="entry name" value="CmoB"/>
</dbReference>
<dbReference type="InterPro" id="IPR027555">
    <property type="entry name" value="Mo5U34_MeTrfas-like"/>
</dbReference>
<dbReference type="InterPro" id="IPR029063">
    <property type="entry name" value="SAM-dependent_MTases_sf"/>
</dbReference>
<dbReference type="NCBIfam" id="NF011650">
    <property type="entry name" value="PRK15068.1"/>
    <property type="match status" value="1"/>
</dbReference>
<dbReference type="NCBIfam" id="TIGR00452">
    <property type="entry name" value="tRNA 5-methoxyuridine(34)/uridine 5-oxyacetic acid(34) synthase CmoB"/>
    <property type="match status" value="1"/>
</dbReference>
<dbReference type="PANTHER" id="PTHR43464">
    <property type="entry name" value="METHYLTRANSFERASE"/>
    <property type="match status" value="1"/>
</dbReference>
<dbReference type="PANTHER" id="PTHR43464:SF95">
    <property type="entry name" value="TRNA U34 CARBOXYMETHYLTRANSFERASE"/>
    <property type="match status" value="1"/>
</dbReference>
<dbReference type="Pfam" id="PF08003">
    <property type="entry name" value="Methyltransf_9"/>
    <property type="match status" value="1"/>
</dbReference>
<dbReference type="SUPFAM" id="SSF53335">
    <property type="entry name" value="S-adenosyl-L-methionine-dependent methyltransferases"/>
    <property type="match status" value="1"/>
</dbReference>
<protein>
    <recommendedName>
        <fullName evidence="1">tRNA U34 carboxymethyltransferase</fullName>
        <ecNumber evidence="1">2.5.1.-</ecNumber>
    </recommendedName>
</protein>
<sequence length="323" mass="36247">MSQFADFYQLIAKSPLSHWLNTLPAQLSEWEQTSQHCKFSQWFNAVERLPMLTPARLDLLHGVEADCDPPLSAGQQAGIESLLRQLMPWRKGPFSLYGVSIDTEWRSDWKWERVLPHIAPLAGRLILDVGCGSGYHLWRMVGAGAQLAVGIDPMQLFYCQFAAVRKLLGGDQRAHLLPLGIEQLPALAAFDTVFSMGVLYHRRSPLDHLLQLKNQLVSGGELVLETLVIEGDSQQVLVPGERYAQMRNVYFIPSATALVSWLEKCGFVNVRHVDMSVTSTDEQRRTAWMTSESLADFLHSDDPRLTVEGHPAPLRAVIVAEKH</sequence>
<accession>Q2NTJ8</accession>
<proteinExistence type="inferred from homology"/>
<evidence type="ECO:0000255" key="1">
    <source>
        <dbReference type="HAMAP-Rule" id="MF_01590"/>
    </source>
</evidence>
<comment type="function">
    <text evidence="1">Catalyzes carboxymethyl transfer from carboxy-S-adenosyl-L-methionine (Cx-SAM) to 5-hydroxyuridine (ho5U) to form 5-carboxymethoxyuridine (cmo5U) at position 34 in tRNAs.</text>
</comment>
<comment type="catalytic activity">
    <reaction evidence="1">
        <text>carboxy-S-adenosyl-L-methionine + 5-hydroxyuridine(34) in tRNA = 5-carboxymethoxyuridine(34) in tRNA + S-adenosyl-L-homocysteine + H(+)</text>
        <dbReference type="Rhea" id="RHEA:52848"/>
        <dbReference type="Rhea" id="RHEA-COMP:13381"/>
        <dbReference type="Rhea" id="RHEA-COMP:13383"/>
        <dbReference type="ChEBI" id="CHEBI:15378"/>
        <dbReference type="ChEBI" id="CHEBI:57856"/>
        <dbReference type="ChEBI" id="CHEBI:134278"/>
        <dbReference type="ChEBI" id="CHEBI:136877"/>
        <dbReference type="ChEBI" id="CHEBI:136879"/>
    </reaction>
</comment>
<comment type="subunit">
    <text evidence="1">Homotetramer.</text>
</comment>
<comment type="similarity">
    <text evidence="1">Belongs to the class I-like SAM-binding methyltransferase superfamily. CmoB family.</text>
</comment>
<reference key="1">
    <citation type="journal article" date="2006" name="Genome Res.">
        <title>Massive genome erosion and functional adaptations provide insights into the symbiotic lifestyle of Sodalis glossinidius in the tsetse host.</title>
        <authorList>
            <person name="Toh H."/>
            <person name="Weiss B.L."/>
            <person name="Perkin S.A.H."/>
            <person name="Yamashita A."/>
            <person name="Oshima K."/>
            <person name="Hattori M."/>
            <person name="Aksoy S."/>
        </authorList>
    </citation>
    <scope>NUCLEOTIDE SEQUENCE [LARGE SCALE GENOMIC DNA]</scope>
    <source>
        <strain>morsitans</strain>
    </source>
</reference>
<feature type="chain" id="PRO_0000313980" description="tRNA U34 carboxymethyltransferase">
    <location>
        <begin position="1"/>
        <end position="323"/>
    </location>
</feature>
<feature type="binding site" evidence="1">
    <location>
        <position position="91"/>
    </location>
    <ligand>
        <name>carboxy-S-adenosyl-L-methionine</name>
        <dbReference type="ChEBI" id="CHEBI:134278"/>
    </ligand>
</feature>
<feature type="binding site" evidence="1">
    <location>
        <position position="105"/>
    </location>
    <ligand>
        <name>carboxy-S-adenosyl-L-methionine</name>
        <dbReference type="ChEBI" id="CHEBI:134278"/>
    </ligand>
</feature>
<feature type="binding site" evidence="1">
    <location>
        <position position="110"/>
    </location>
    <ligand>
        <name>carboxy-S-adenosyl-L-methionine</name>
        <dbReference type="ChEBI" id="CHEBI:134278"/>
    </ligand>
</feature>
<feature type="binding site" evidence="1">
    <location>
        <position position="130"/>
    </location>
    <ligand>
        <name>carboxy-S-adenosyl-L-methionine</name>
        <dbReference type="ChEBI" id="CHEBI:134278"/>
    </ligand>
</feature>
<feature type="binding site" evidence="1">
    <location>
        <begin position="181"/>
        <end position="182"/>
    </location>
    <ligand>
        <name>carboxy-S-adenosyl-L-methionine</name>
        <dbReference type="ChEBI" id="CHEBI:134278"/>
    </ligand>
</feature>
<feature type="binding site" evidence="1">
    <location>
        <position position="196"/>
    </location>
    <ligand>
        <name>carboxy-S-adenosyl-L-methionine</name>
        <dbReference type="ChEBI" id="CHEBI:134278"/>
    </ligand>
</feature>
<feature type="binding site" evidence="1">
    <location>
        <position position="200"/>
    </location>
    <ligand>
        <name>carboxy-S-adenosyl-L-methionine</name>
        <dbReference type="ChEBI" id="CHEBI:134278"/>
    </ligand>
</feature>
<feature type="binding site" evidence="1">
    <location>
        <position position="315"/>
    </location>
    <ligand>
        <name>carboxy-S-adenosyl-L-methionine</name>
        <dbReference type="ChEBI" id="CHEBI:134278"/>
    </ligand>
</feature>